<dbReference type="EC" id="3.4.22.-" evidence="3"/>
<dbReference type="EMBL" id="AL163975">
    <property type="protein sequence ID" value="CAB88124.1"/>
    <property type="molecule type" value="Genomic_DNA"/>
</dbReference>
<dbReference type="EMBL" id="CP002686">
    <property type="protein sequence ID" value="AEE77849.1"/>
    <property type="molecule type" value="Genomic_DNA"/>
</dbReference>
<dbReference type="EMBL" id="AK118634">
    <property type="protein sequence ID" value="BAC43231.1"/>
    <property type="molecule type" value="mRNA"/>
</dbReference>
<dbReference type="EMBL" id="AY087918">
    <property type="protein sequence ID" value="AAM65468.1"/>
    <property type="molecule type" value="mRNA"/>
</dbReference>
<dbReference type="PIR" id="T48950">
    <property type="entry name" value="T48950"/>
</dbReference>
<dbReference type="RefSeq" id="NP_566867.1">
    <property type="nucleotide sequence ID" value="NM_114264.3"/>
</dbReference>
<dbReference type="SMR" id="Q9LXW3"/>
<dbReference type="FunCoup" id="Q9LXW3">
    <property type="interactions" value="65"/>
</dbReference>
<dbReference type="STRING" id="3702.Q9LXW3"/>
<dbReference type="MEROPS" id="C01.A18"/>
<dbReference type="MEROPS" id="I29.003"/>
<dbReference type="GlyCosmos" id="Q9LXW3">
    <property type="glycosylation" value="3 sites, No reported glycans"/>
</dbReference>
<dbReference type="GlyGen" id="Q9LXW3">
    <property type="glycosylation" value="3 sites"/>
</dbReference>
<dbReference type="PaxDb" id="3702-AT3G43960.1"/>
<dbReference type="ProteomicsDB" id="235075"/>
<dbReference type="EnsemblPlants" id="AT3G43960.1">
    <property type="protein sequence ID" value="AT3G43960.1"/>
    <property type="gene ID" value="AT3G43960"/>
</dbReference>
<dbReference type="GeneID" id="823513"/>
<dbReference type="Gramene" id="AT3G43960.1">
    <property type="protein sequence ID" value="AT3G43960.1"/>
    <property type="gene ID" value="AT3G43960"/>
</dbReference>
<dbReference type="KEGG" id="ath:AT3G43960"/>
<dbReference type="Araport" id="AT3G43960"/>
<dbReference type="TAIR" id="AT3G43960"/>
<dbReference type="eggNOG" id="KOG1543">
    <property type="taxonomic scope" value="Eukaryota"/>
</dbReference>
<dbReference type="HOGENOM" id="CLU_012184_1_0_1"/>
<dbReference type="InParanoid" id="Q9LXW3"/>
<dbReference type="OMA" id="EQWLMEN"/>
<dbReference type="PhylomeDB" id="Q9LXW3"/>
<dbReference type="PRO" id="PR:Q9LXW3"/>
<dbReference type="Proteomes" id="UP000006548">
    <property type="component" value="Chromosome 3"/>
</dbReference>
<dbReference type="ExpressionAtlas" id="Q9LXW3">
    <property type="expression patterns" value="baseline and differential"/>
</dbReference>
<dbReference type="GO" id="GO:0008234">
    <property type="term" value="F:cysteine-type peptidase activity"/>
    <property type="evidence" value="ECO:0007669"/>
    <property type="project" value="UniProtKB-KW"/>
</dbReference>
<dbReference type="GO" id="GO:0006508">
    <property type="term" value="P:proteolysis"/>
    <property type="evidence" value="ECO:0007669"/>
    <property type="project" value="UniProtKB-KW"/>
</dbReference>
<dbReference type="GO" id="GO:0048767">
    <property type="term" value="P:root hair elongation"/>
    <property type="evidence" value="ECO:0000315"/>
    <property type="project" value="TAIR"/>
</dbReference>
<dbReference type="CDD" id="cd02248">
    <property type="entry name" value="Peptidase_C1A"/>
    <property type="match status" value="1"/>
</dbReference>
<dbReference type="FunFam" id="3.90.70.10:FF:000067">
    <property type="entry name" value="Senescence-specific cysteine protease"/>
    <property type="match status" value="1"/>
</dbReference>
<dbReference type="Gene3D" id="3.90.70.10">
    <property type="entry name" value="Cysteine proteinases"/>
    <property type="match status" value="1"/>
</dbReference>
<dbReference type="InterPro" id="IPR038765">
    <property type="entry name" value="Papain-like_cys_pep_sf"/>
</dbReference>
<dbReference type="InterPro" id="IPR025661">
    <property type="entry name" value="Pept_asp_AS"/>
</dbReference>
<dbReference type="InterPro" id="IPR000169">
    <property type="entry name" value="Pept_cys_AS"/>
</dbReference>
<dbReference type="InterPro" id="IPR013128">
    <property type="entry name" value="Peptidase_C1A"/>
</dbReference>
<dbReference type="InterPro" id="IPR000668">
    <property type="entry name" value="Peptidase_C1A_C"/>
</dbReference>
<dbReference type="InterPro" id="IPR039417">
    <property type="entry name" value="Peptidase_C1A_papain-like"/>
</dbReference>
<dbReference type="InterPro" id="IPR013201">
    <property type="entry name" value="Prot_inhib_I29"/>
</dbReference>
<dbReference type="PANTHER" id="PTHR12411">
    <property type="entry name" value="CYSTEINE PROTEASE FAMILY C1-RELATED"/>
    <property type="match status" value="1"/>
</dbReference>
<dbReference type="Pfam" id="PF08246">
    <property type="entry name" value="Inhibitor_I29"/>
    <property type="match status" value="1"/>
</dbReference>
<dbReference type="Pfam" id="PF00112">
    <property type="entry name" value="Peptidase_C1"/>
    <property type="match status" value="1"/>
</dbReference>
<dbReference type="PRINTS" id="PR00705">
    <property type="entry name" value="PAPAIN"/>
</dbReference>
<dbReference type="SMART" id="SM00848">
    <property type="entry name" value="Inhibitor_I29"/>
    <property type="match status" value="1"/>
</dbReference>
<dbReference type="SMART" id="SM00645">
    <property type="entry name" value="Pept_C1"/>
    <property type="match status" value="1"/>
</dbReference>
<dbReference type="SUPFAM" id="SSF54001">
    <property type="entry name" value="Cysteine proteinases"/>
    <property type="match status" value="1"/>
</dbReference>
<dbReference type="PROSITE" id="PS00640">
    <property type="entry name" value="THIOL_PROTEASE_ASN"/>
    <property type="match status" value="1"/>
</dbReference>
<dbReference type="PROSITE" id="PS00139">
    <property type="entry name" value="THIOL_PROTEASE_CYS"/>
    <property type="match status" value="1"/>
</dbReference>
<keyword id="KW-1015">Disulfide bond</keyword>
<keyword id="KW-0325">Glycoprotein</keyword>
<keyword id="KW-0378">Hydrolase</keyword>
<keyword id="KW-0645">Protease</keyword>
<keyword id="KW-1185">Reference proteome</keyword>
<keyword id="KW-0732">Signal</keyword>
<keyword id="KW-0788">Thiol protease</keyword>
<keyword id="KW-0865">Zymogen</keyword>
<accession>Q9LXW3</accession>
<accession>Q8LAC2</accession>
<reference key="1">
    <citation type="journal article" date="2000" name="Nature">
        <title>Sequence and analysis of chromosome 3 of the plant Arabidopsis thaliana.</title>
        <authorList>
            <person name="Salanoubat M."/>
            <person name="Lemcke K."/>
            <person name="Rieger M."/>
            <person name="Ansorge W."/>
            <person name="Unseld M."/>
            <person name="Fartmann B."/>
            <person name="Valle G."/>
            <person name="Bloecker H."/>
            <person name="Perez-Alonso M."/>
            <person name="Obermaier B."/>
            <person name="Delseny M."/>
            <person name="Boutry M."/>
            <person name="Grivell L.A."/>
            <person name="Mache R."/>
            <person name="Puigdomenech P."/>
            <person name="De Simone V."/>
            <person name="Choisne N."/>
            <person name="Artiguenave F."/>
            <person name="Robert C."/>
            <person name="Brottier P."/>
            <person name="Wincker P."/>
            <person name="Cattolico L."/>
            <person name="Weissenbach J."/>
            <person name="Saurin W."/>
            <person name="Quetier F."/>
            <person name="Schaefer M."/>
            <person name="Mueller-Auer S."/>
            <person name="Gabel C."/>
            <person name="Fuchs M."/>
            <person name="Benes V."/>
            <person name="Wurmbach E."/>
            <person name="Drzonek H."/>
            <person name="Erfle H."/>
            <person name="Jordan N."/>
            <person name="Bangert S."/>
            <person name="Wiedelmann R."/>
            <person name="Kranz H."/>
            <person name="Voss H."/>
            <person name="Holland R."/>
            <person name="Brandt P."/>
            <person name="Nyakatura G."/>
            <person name="Vezzi A."/>
            <person name="D'Angelo M."/>
            <person name="Pallavicini A."/>
            <person name="Toppo S."/>
            <person name="Simionati B."/>
            <person name="Conrad A."/>
            <person name="Hornischer K."/>
            <person name="Kauer G."/>
            <person name="Loehnert T.-H."/>
            <person name="Nordsiek G."/>
            <person name="Reichelt J."/>
            <person name="Scharfe M."/>
            <person name="Schoen O."/>
            <person name="Bargues M."/>
            <person name="Terol J."/>
            <person name="Climent J."/>
            <person name="Navarro P."/>
            <person name="Collado C."/>
            <person name="Perez-Perez A."/>
            <person name="Ottenwaelder B."/>
            <person name="Duchemin D."/>
            <person name="Cooke R."/>
            <person name="Laudie M."/>
            <person name="Berger-Llauro C."/>
            <person name="Purnelle B."/>
            <person name="Masuy D."/>
            <person name="de Haan M."/>
            <person name="Maarse A.C."/>
            <person name="Alcaraz J.-P."/>
            <person name="Cottet A."/>
            <person name="Casacuberta E."/>
            <person name="Monfort A."/>
            <person name="Argiriou A."/>
            <person name="Flores M."/>
            <person name="Liguori R."/>
            <person name="Vitale D."/>
            <person name="Mannhaupt G."/>
            <person name="Haase D."/>
            <person name="Schoof H."/>
            <person name="Rudd S."/>
            <person name="Zaccaria P."/>
            <person name="Mewes H.-W."/>
            <person name="Mayer K.F.X."/>
            <person name="Kaul S."/>
            <person name="Town C.D."/>
            <person name="Koo H.L."/>
            <person name="Tallon L.J."/>
            <person name="Jenkins J."/>
            <person name="Rooney T."/>
            <person name="Rizzo M."/>
            <person name="Walts A."/>
            <person name="Utterback T."/>
            <person name="Fujii C.Y."/>
            <person name="Shea T.P."/>
            <person name="Creasy T.H."/>
            <person name="Haas B."/>
            <person name="Maiti R."/>
            <person name="Wu D."/>
            <person name="Peterson J."/>
            <person name="Van Aken S."/>
            <person name="Pai G."/>
            <person name="Militscher J."/>
            <person name="Sellers P."/>
            <person name="Gill J.E."/>
            <person name="Feldblyum T.V."/>
            <person name="Preuss D."/>
            <person name="Lin X."/>
            <person name="Nierman W.C."/>
            <person name="Salzberg S.L."/>
            <person name="White O."/>
            <person name="Venter J.C."/>
            <person name="Fraser C.M."/>
            <person name="Kaneko T."/>
            <person name="Nakamura Y."/>
            <person name="Sato S."/>
            <person name="Kato T."/>
            <person name="Asamizu E."/>
            <person name="Sasamoto S."/>
            <person name="Kimura T."/>
            <person name="Idesawa K."/>
            <person name="Kawashima K."/>
            <person name="Kishida Y."/>
            <person name="Kiyokawa C."/>
            <person name="Kohara M."/>
            <person name="Matsumoto M."/>
            <person name="Matsuno A."/>
            <person name="Muraki A."/>
            <person name="Nakayama S."/>
            <person name="Nakazaki N."/>
            <person name="Shinpo S."/>
            <person name="Takeuchi C."/>
            <person name="Wada T."/>
            <person name="Watanabe A."/>
            <person name="Yamada M."/>
            <person name="Yasuda M."/>
            <person name="Tabata S."/>
        </authorList>
    </citation>
    <scope>NUCLEOTIDE SEQUENCE [LARGE SCALE GENOMIC DNA]</scope>
    <source>
        <strain>cv. Columbia</strain>
    </source>
</reference>
<reference key="2">
    <citation type="journal article" date="2017" name="Plant J.">
        <title>Araport11: a complete reannotation of the Arabidopsis thaliana reference genome.</title>
        <authorList>
            <person name="Cheng C.Y."/>
            <person name="Krishnakumar V."/>
            <person name="Chan A.P."/>
            <person name="Thibaud-Nissen F."/>
            <person name="Schobel S."/>
            <person name="Town C.D."/>
        </authorList>
    </citation>
    <scope>GENOME REANNOTATION</scope>
    <source>
        <strain>cv. Columbia</strain>
    </source>
</reference>
<reference key="3">
    <citation type="journal article" date="2002" name="Science">
        <title>Functional annotation of a full-length Arabidopsis cDNA collection.</title>
        <authorList>
            <person name="Seki M."/>
            <person name="Narusaka M."/>
            <person name="Kamiya A."/>
            <person name="Ishida J."/>
            <person name="Satou M."/>
            <person name="Sakurai T."/>
            <person name="Nakajima M."/>
            <person name="Enju A."/>
            <person name="Akiyama K."/>
            <person name="Oono Y."/>
            <person name="Muramatsu M."/>
            <person name="Hayashizaki Y."/>
            <person name="Kawai J."/>
            <person name="Carninci P."/>
            <person name="Itoh M."/>
            <person name="Ishii Y."/>
            <person name="Arakawa T."/>
            <person name="Shibata K."/>
            <person name="Shinagawa A."/>
            <person name="Shinozaki K."/>
        </authorList>
    </citation>
    <scope>NUCLEOTIDE SEQUENCE [LARGE SCALE MRNA]</scope>
    <source>
        <strain>cv. Columbia</strain>
    </source>
</reference>
<reference key="4">
    <citation type="submission" date="2002-03" db="EMBL/GenBank/DDBJ databases">
        <title>Full-length cDNA from Arabidopsis thaliana.</title>
        <authorList>
            <person name="Brover V.V."/>
            <person name="Troukhan M.E."/>
            <person name="Alexandrov N.A."/>
            <person name="Lu Y.-P."/>
            <person name="Flavell R.B."/>
            <person name="Feldmann K.A."/>
        </authorList>
    </citation>
    <scope>NUCLEOTIDE SEQUENCE [LARGE SCALE MRNA]</scope>
</reference>
<reference key="5">
    <citation type="journal article" date="2011" name="Plant Physiol.">
        <title>Coexpression-based clustering of Arabidopsis root genes predicts functional modules in early phosphate deficiency signaling.</title>
        <authorList>
            <person name="Lin W.D."/>
            <person name="Liao Y.Y."/>
            <person name="Yang T.J."/>
            <person name="Pan C.Y."/>
            <person name="Buckhout T.J."/>
            <person name="Schmidt W."/>
        </authorList>
    </citation>
    <scope>TISSUE SPECIFICITY</scope>
    <scope>DISRUPTION PHENOTYPE</scope>
</reference>
<protein>
    <recommendedName>
        <fullName evidence="11">Probable cysteine protease RDL3</fullName>
        <ecNumber evidence="3">3.4.22.-</ecNumber>
    </recommendedName>
    <alternativeName>
        <fullName evidence="11">Probable cysteine proteinase At3g43960</fullName>
    </alternativeName>
    <alternativeName>
        <fullName evidence="11">RD21A-like protease 3</fullName>
    </alternativeName>
</protein>
<gene>
    <name evidence="11" type="primary">RDL3</name>
    <name evidence="12" type="ordered locus">At3g43960</name>
    <name evidence="13" type="ORF">T15B3_100</name>
</gene>
<sequence length="376" mass="41541">MAISFRTLALLTLSVLLISISLGVVTATESQRNEGEVLTMYEQWLVENGKNYNGLGEKERRFKIFKDNLKRIEEHNSDPNRSYERGLNKFSDLTADEFQASYLGGKMEKKSLSDVAERYQYKEGDVLPDEVDWRERGAVVPRVKRQGECGSCWAFAATGAVEGINQITTGELVSLSEQELIDCDRGNDNFGCAGGGAVWAFEFIKENGGIVSDEVYGYTGEDTAACKAIEMKTTRVVTINGHEVVPVNDEMSLKKAVAYQPISVMISAANMSDYKSGVYKGACSNLWGDHNVLIVGYGTSSDEGDYWLIRNSWGPEWGEGGYLRLQRNFHEPTGKCAVAVAPVYPIKSNSSSHLLSPSVFKLVVLFVFQLISLALL</sequence>
<proteinExistence type="evidence at transcript level"/>
<organism>
    <name type="scientific">Arabidopsis thaliana</name>
    <name type="common">Mouse-ear cress</name>
    <dbReference type="NCBI Taxonomy" id="3702"/>
    <lineage>
        <taxon>Eukaryota</taxon>
        <taxon>Viridiplantae</taxon>
        <taxon>Streptophyta</taxon>
        <taxon>Embryophyta</taxon>
        <taxon>Tracheophyta</taxon>
        <taxon>Spermatophyta</taxon>
        <taxon>Magnoliopsida</taxon>
        <taxon>eudicotyledons</taxon>
        <taxon>Gunneridae</taxon>
        <taxon>Pentapetalae</taxon>
        <taxon>rosids</taxon>
        <taxon>malvids</taxon>
        <taxon>Brassicales</taxon>
        <taxon>Brassicaceae</taxon>
        <taxon>Camelineae</taxon>
        <taxon>Arabidopsis</taxon>
    </lineage>
</organism>
<comment type="function">
    <text evidence="2">Probable thiol protease.</text>
</comment>
<comment type="tissue specificity">
    <text evidence="10">Expressed in root hairs.</text>
</comment>
<comment type="disruption phenotype">
    <text evidence="10">Decreased root hair length under phosphate deficiency.</text>
</comment>
<comment type="similarity">
    <text evidence="7 9">Belongs to the peptidase C1 family.</text>
</comment>
<feature type="signal peptide" evidence="5">
    <location>
        <begin position="1"/>
        <end position="27"/>
    </location>
</feature>
<feature type="propeptide" id="PRO_0000026461" description="Activation peptide" evidence="1">
    <location>
        <begin position="28"/>
        <end position="126"/>
    </location>
</feature>
<feature type="chain" id="PRO_0000026462" description="Probable cysteine protease RDL3">
    <location>
        <begin position="127"/>
        <end position="376"/>
    </location>
</feature>
<feature type="active site" evidence="7">
    <location>
        <position position="152"/>
    </location>
</feature>
<feature type="active site" evidence="8">
    <location>
        <position position="290"/>
    </location>
</feature>
<feature type="active site" evidence="9">
    <location>
        <position position="311"/>
    </location>
</feature>
<feature type="glycosylation site" description="N-linked (GlcNAc...) asparagine" evidence="6">
    <location>
        <position position="80"/>
    </location>
</feature>
<feature type="glycosylation site" description="N-linked (GlcNAc...) asparagine" evidence="6">
    <location>
        <position position="270"/>
    </location>
</feature>
<feature type="glycosylation site" description="N-linked (GlcNAc...) asparagine" evidence="6">
    <location>
        <position position="349"/>
    </location>
</feature>
<feature type="disulfide bond" evidence="4">
    <location>
        <begin position="149"/>
        <end position="192"/>
    </location>
</feature>
<feature type="disulfide bond" evidence="4">
    <location>
        <begin position="183"/>
        <end position="226"/>
    </location>
</feature>
<feature type="disulfide bond" evidence="4">
    <location>
        <begin position="283"/>
        <end position="336"/>
    </location>
</feature>
<feature type="sequence conflict" description="In Ref. 4; AAM65468." evidence="11" ref="4">
    <original>E</original>
    <variation>G</variation>
    <location>
        <position position="36"/>
    </location>
</feature>
<evidence type="ECO:0000250" key="1">
    <source>
        <dbReference type="UniProtKB" id="P00785"/>
    </source>
</evidence>
<evidence type="ECO:0000250" key="2">
    <source>
        <dbReference type="UniProtKB" id="P43297"/>
    </source>
</evidence>
<evidence type="ECO:0000250" key="3">
    <source>
        <dbReference type="UniProtKB" id="P80884"/>
    </source>
</evidence>
<evidence type="ECO:0000250" key="4">
    <source>
        <dbReference type="UniProtKB" id="P84346"/>
    </source>
</evidence>
<evidence type="ECO:0000255" key="5"/>
<evidence type="ECO:0000255" key="6">
    <source>
        <dbReference type="PROSITE-ProRule" id="PRU00498"/>
    </source>
</evidence>
<evidence type="ECO:0000255" key="7">
    <source>
        <dbReference type="PROSITE-ProRule" id="PRU10088"/>
    </source>
</evidence>
<evidence type="ECO:0000255" key="8">
    <source>
        <dbReference type="PROSITE-ProRule" id="PRU10089"/>
    </source>
</evidence>
<evidence type="ECO:0000255" key="9">
    <source>
        <dbReference type="PROSITE-ProRule" id="PRU10090"/>
    </source>
</evidence>
<evidence type="ECO:0000269" key="10">
    <source>
    </source>
</evidence>
<evidence type="ECO:0000305" key="11"/>
<evidence type="ECO:0000312" key="12">
    <source>
        <dbReference type="Araport" id="AT3G43960"/>
    </source>
</evidence>
<evidence type="ECO:0000312" key="13">
    <source>
        <dbReference type="EMBL" id="CAB88124.1"/>
    </source>
</evidence>
<name>RDL3_ARATH</name>